<protein>
    <recommendedName>
        <fullName>CD59 glycoprotein</fullName>
    </recommendedName>
    <alternativeName>
        <fullName>MAC-inhibitory protein</fullName>
        <shortName>MAC-IP</shortName>
    </alternativeName>
    <alternativeName>
        <fullName>Membrane attack complex inhibition factor</fullName>
        <shortName>MACIF</shortName>
    </alternativeName>
    <alternativeName>
        <fullName>Protectin</fullName>
    </alternativeName>
    <cdAntigenName>CD59</cdAntigenName>
</protein>
<reference key="1">
    <citation type="journal article" date="1995" name="Immunogenetics">
        <title>Primate terminal complement inhibitor homologues of human CD59.</title>
        <authorList>
            <person name="Fodor W.L."/>
            <person name="Rollins S.A."/>
            <person name="Bianco-Caron S."/>
            <person name="Burton W.V."/>
            <person name="Guilmette E.R."/>
            <person name="Rother R.P."/>
            <person name="Zavoico G.B."/>
            <person name="Squinto S.P."/>
        </authorList>
    </citation>
    <scope>NUCLEOTIDE SEQUENCE [GENOMIC DNA]</scope>
</reference>
<organism>
    <name type="scientific">Aotus trivirgatus</name>
    <name type="common">Three-striped night monkey</name>
    <name type="synonym">Douroucouli</name>
    <dbReference type="NCBI Taxonomy" id="9505"/>
    <lineage>
        <taxon>Eukaryota</taxon>
        <taxon>Metazoa</taxon>
        <taxon>Chordata</taxon>
        <taxon>Craniata</taxon>
        <taxon>Vertebrata</taxon>
        <taxon>Euteleostomi</taxon>
        <taxon>Mammalia</taxon>
        <taxon>Eutheria</taxon>
        <taxon>Euarchontoglires</taxon>
        <taxon>Primates</taxon>
        <taxon>Haplorrhini</taxon>
        <taxon>Platyrrhini</taxon>
        <taxon>Aotidae</taxon>
        <taxon>Aotus</taxon>
    </lineage>
</organism>
<proteinExistence type="inferred from homology"/>
<sequence>MGIQGGSVLFGLLLVLAVFCHSGNSLQCYSCPYPTTQCTMTTNCTSNLDSCLIAKAGSRVYYRCWKFEDCTFSRVSNQLSENELKYYCCKKNLCNFNEALKNGGTTLSKKTVLLLVIPFLVAAWSLHP</sequence>
<feature type="signal peptide" evidence="1">
    <location>
        <begin position="1"/>
        <end position="25"/>
    </location>
</feature>
<feature type="chain" id="PRO_0000036102" description="CD59 glycoprotein">
    <location>
        <begin position="26"/>
        <end position="102"/>
    </location>
</feature>
<feature type="propeptide" id="PRO_0000036103" description="Removed in mature form" evidence="1">
    <location>
        <begin position="103"/>
        <end position="128"/>
    </location>
</feature>
<feature type="domain" description="UPAR/Ly6">
    <location>
        <begin position="26"/>
        <end position="108"/>
    </location>
</feature>
<feature type="lipid moiety-binding region" description="GPI-anchor amidated asparagine" evidence="1">
    <location>
        <position position="102"/>
    </location>
</feature>
<feature type="glycosylation site" description="N-linked (GlcNAc...) asparagine" evidence="2">
    <location>
        <position position="43"/>
    </location>
</feature>
<feature type="disulfide bond" evidence="1">
    <location>
        <begin position="28"/>
        <end position="51"/>
    </location>
</feature>
<feature type="disulfide bond" evidence="1">
    <location>
        <begin position="31"/>
        <end position="38"/>
    </location>
</feature>
<feature type="disulfide bond" evidence="1">
    <location>
        <begin position="44"/>
        <end position="64"/>
    </location>
</feature>
<feature type="disulfide bond" evidence="1">
    <location>
        <begin position="70"/>
        <end position="88"/>
    </location>
</feature>
<feature type="disulfide bond" evidence="1">
    <location>
        <begin position="89"/>
        <end position="94"/>
    </location>
</feature>
<accession>P51447</accession>
<comment type="function">
    <text evidence="1">Potent inhibitor of the complement membrane attack complex (MAC) action, which protects self-cells from damage during complement activation. Acts by binding to the beta-haipins of C8 (C8A and C8B) components of the assembling MAC, forming an intermolecular beta-sheet that prevents incorporation of the multiple copies of C9 required for complete formation of the osmolytic pore.</text>
</comment>
<comment type="subunit">
    <text evidence="1">Interacts with T-cell surface antigen CD2.</text>
</comment>
<comment type="subcellular location">
    <subcellularLocation>
        <location evidence="1">Cell membrane</location>
        <topology evidence="1">Lipid-anchor</topology>
        <topology evidence="1">GPI-anchor</topology>
    </subcellularLocation>
    <subcellularLocation>
        <location evidence="1">Secreted</location>
    </subcellularLocation>
    <text evidence="1">Localizes to the cell surface. Soluble form found in a number of tissues.</text>
</comment>
<comment type="PTM">
    <text evidence="1">N- and O-glycosylated.</text>
</comment>
<name>CD59_AOTTR</name>
<gene>
    <name evidence="3" type="primary">CD59</name>
</gene>
<keyword id="KW-1003">Cell membrane</keyword>
<keyword id="KW-1015">Disulfide bond</keyword>
<keyword id="KW-0325">Glycoprotein</keyword>
<keyword id="KW-0336">GPI-anchor</keyword>
<keyword id="KW-0449">Lipoprotein</keyword>
<keyword id="KW-0472">Membrane</keyword>
<keyword id="KW-0964">Secreted</keyword>
<keyword id="KW-0732">Signal</keyword>
<evidence type="ECO:0000250" key="1">
    <source>
        <dbReference type="UniProtKB" id="P13987"/>
    </source>
</evidence>
<evidence type="ECO:0000255" key="2"/>
<evidence type="ECO:0000303" key="3">
    <source>
    </source>
</evidence>
<dbReference type="EMBL" id="L22861">
    <property type="protein sequence ID" value="AAA35372.1"/>
    <property type="molecule type" value="Genomic_DNA"/>
</dbReference>
<dbReference type="SMR" id="P51447"/>
<dbReference type="GlyCosmos" id="P51447">
    <property type="glycosylation" value="1 site, No reported glycans"/>
</dbReference>
<dbReference type="GO" id="GO:0005886">
    <property type="term" value="C:plasma membrane"/>
    <property type="evidence" value="ECO:0007669"/>
    <property type="project" value="UniProtKB-SubCell"/>
</dbReference>
<dbReference type="GO" id="GO:0098552">
    <property type="term" value="C:side of membrane"/>
    <property type="evidence" value="ECO:0007669"/>
    <property type="project" value="UniProtKB-KW"/>
</dbReference>
<dbReference type="GO" id="GO:0001848">
    <property type="term" value="F:complement binding"/>
    <property type="evidence" value="ECO:0007669"/>
    <property type="project" value="TreeGrafter"/>
</dbReference>
<dbReference type="GO" id="GO:0001971">
    <property type="term" value="P:negative regulation of activation of membrane attack complex"/>
    <property type="evidence" value="ECO:0007669"/>
    <property type="project" value="TreeGrafter"/>
</dbReference>
<dbReference type="CDD" id="cd23554">
    <property type="entry name" value="TFP_LU_ECD_CD59"/>
    <property type="match status" value="1"/>
</dbReference>
<dbReference type="FunFam" id="2.10.60.10:FF:000023">
    <property type="entry name" value="CD59 glycoprotein preproprotein"/>
    <property type="match status" value="1"/>
</dbReference>
<dbReference type="Gene3D" id="2.10.60.10">
    <property type="entry name" value="CD59"/>
    <property type="match status" value="1"/>
</dbReference>
<dbReference type="InterPro" id="IPR056949">
    <property type="entry name" value="CD59"/>
</dbReference>
<dbReference type="InterPro" id="IPR018363">
    <property type="entry name" value="CD59_antigen_CS"/>
</dbReference>
<dbReference type="InterPro" id="IPR016054">
    <property type="entry name" value="LY6_UPA_recep-like"/>
</dbReference>
<dbReference type="InterPro" id="IPR045860">
    <property type="entry name" value="Snake_toxin-like_sf"/>
</dbReference>
<dbReference type="PANTHER" id="PTHR10036">
    <property type="entry name" value="CD59 GLYCOPROTEIN"/>
    <property type="match status" value="1"/>
</dbReference>
<dbReference type="PANTHER" id="PTHR10036:SF24">
    <property type="entry name" value="CD59 GLYCOPROTEIN"/>
    <property type="match status" value="1"/>
</dbReference>
<dbReference type="Pfam" id="PF25152">
    <property type="entry name" value="CD59"/>
    <property type="match status" value="1"/>
</dbReference>
<dbReference type="SMART" id="SM00134">
    <property type="entry name" value="LU"/>
    <property type="match status" value="1"/>
</dbReference>
<dbReference type="SUPFAM" id="SSF57302">
    <property type="entry name" value="Snake toxin-like"/>
    <property type="match status" value="1"/>
</dbReference>
<dbReference type="PROSITE" id="PS00983">
    <property type="entry name" value="LY6_UPAR"/>
    <property type="match status" value="1"/>
</dbReference>